<reference key="1">
    <citation type="journal article" date="2008" name="Genomics">
        <title>Evolution in the laboratory: the genome of Halobacterium salinarum strain R1 compared to that of strain NRC-1.</title>
        <authorList>
            <person name="Pfeiffer F."/>
            <person name="Schuster S.C."/>
            <person name="Broicher A."/>
            <person name="Falb M."/>
            <person name="Palm P."/>
            <person name="Rodewald K."/>
            <person name="Ruepp A."/>
            <person name="Soppa J."/>
            <person name="Tittor J."/>
            <person name="Oesterhelt D."/>
        </authorList>
    </citation>
    <scope>NUCLEOTIDE SEQUENCE [LARGE SCALE GENOMIC DNA]</scope>
    <source>
        <strain>ATCC 29341 / DSM 671 / R1</strain>
    </source>
</reference>
<organism>
    <name type="scientific">Halobacterium salinarum (strain ATCC 29341 / DSM 671 / R1)</name>
    <dbReference type="NCBI Taxonomy" id="478009"/>
    <lineage>
        <taxon>Archaea</taxon>
        <taxon>Methanobacteriati</taxon>
        <taxon>Methanobacteriota</taxon>
        <taxon>Stenosarchaea group</taxon>
        <taxon>Halobacteria</taxon>
        <taxon>Halobacteriales</taxon>
        <taxon>Halobacteriaceae</taxon>
        <taxon>Halobacterium</taxon>
        <taxon>Halobacterium salinarum NRC-34001</taxon>
    </lineage>
</organism>
<feature type="chain" id="PRO_1000189819" description="Probable L-aspartate decarboxylase">
    <location>
        <begin position="1"/>
        <end position="355"/>
    </location>
</feature>
<feature type="modified residue" description="N6-(pyridoxal phosphate)lysine" evidence="1">
    <location>
        <position position="210"/>
    </location>
</feature>
<comment type="function">
    <text evidence="1">Catalyzes the decarboxylation of L-aspartate to produce beta-alanine.</text>
</comment>
<comment type="catalytic activity">
    <reaction evidence="1">
        <text>L-aspartate + H(+) = beta-alanine + CO2</text>
        <dbReference type="Rhea" id="RHEA:19497"/>
        <dbReference type="ChEBI" id="CHEBI:15378"/>
        <dbReference type="ChEBI" id="CHEBI:16526"/>
        <dbReference type="ChEBI" id="CHEBI:29991"/>
        <dbReference type="ChEBI" id="CHEBI:57966"/>
        <dbReference type="EC" id="4.1.1.11"/>
    </reaction>
</comment>
<comment type="cofactor">
    <cofactor evidence="1">
        <name>pyridoxal 5'-phosphate</name>
        <dbReference type="ChEBI" id="CHEBI:597326"/>
    </cofactor>
</comment>
<comment type="pathway">
    <text evidence="1">Cofactor biosynthesis; coenzyme A biosynthesis.</text>
</comment>
<comment type="similarity">
    <text evidence="1">Belongs to the group II decarboxylase family. MfnA subfamily.</text>
</comment>
<dbReference type="EC" id="4.1.1.11" evidence="1"/>
<dbReference type="EMBL" id="AM774415">
    <property type="protein sequence ID" value="CAP13159.1"/>
    <property type="molecule type" value="Genomic_DNA"/>
</dbReference>
<dbReference type="RefSeq" id="WP_010902198.1">
    <property type="nucleotide sequence ID" value="NC_010364.1"/>
</dbReference>
<dbReference type="SMR" id="B0R349"/>
<dbReference type="EnsemblBacteria" id="CAP13159">
    <property type="protein sequence ID" value="CAP13159"/>
    <property type="gene ID" value="OE_1498R"/>
</dbReference>
<dbReference type="GeneID" id="68693271"/>
<dbReference type="KEGG" id="hsl:OE_1498R"/>
<dbReference type="HOGENOM" id="CLU_028929_2_1_2"/>
<dbReference type="PhylomeDB" id="B0R349"/>
<dbReference type="UniPathway" id="UPA00241"/>
<dbReference type="Proteomes" id="UP000001321">
    <property type="component" value="Chromosome"/>
</dbReference>
<dbReference type="GO" id="GO:0004068">
    <property type="term" value="F:aspartate 1-decarboxylase activity"/>
    <property type="evidence" value="ECO:0007669"/>
    <property type="project" value="UniProtKB-UniRule"/>
</dbReference>
<dbReference type="GO" id="GO:0030170">
    <property type="term" value="F:pyridoxal phosphate binding"/>
    <property type="evidence" value="ECO:0007669"/>
    <property type="project" value="UniProtKB-UniRule"/>
</dbReference>
<dbReference type="GO" id="GO:0019752">
    <property type="term" value="P:carboxylic acid metabolic process"/>
    <property type="evidence" value="ECO:0007669"/>
    <property type="project" value="InterPro"/>
</dbReference>
<dbReference type="GO" id="GO:0015937">
    <property type="term" value="P:coenzyme A biosynthetic process"/>
    <property type="evidence" value="ECO:0007669"/>
    <property type="project" value="UniProtKB-UniRule"/>
</dbReference>
<dbReference type="Gene3D" id="3.90.1150.10">
    <property type="entry name" value="Aspartate Aminotransferase, domain 1"/>
    <property type="match status" value="1"/>
</dbReference>
<dbReference type="Gene3D" id="3.40.640.10">
    <property type="entry name" value="Type I PLP-dependent aspartate aminotransferase-like (Major domain)"/>
    <property type="match status" value="1"/>
</dbReference>
<dbReference type="HAMAP" id="MF_01610">
    <property type="entry name" value="MfnA_decarbox"/>
    <property type="match status" value="1"/>
</dbReference>
<dbReference type="InterPro" id="IPR050477">
    <property type="entry name" value="GrpII_AminoAcid_Decarb"/>
</dbReference>
<dbReference type="InterPro" id="IPR020931">
    <property type="entry name" value="MfnA"/>
</dbReference>
<dbReference type="InterPro" id="IPR002129">
    <property type="entry name" value="PyrdxlP-dep_de-COase"/>
</dbReference>
<dbReference type="InterPro" id="IPR015424">
    <property type="entry name" value="PyrdxlP-dep_Trfase"/>
</dbReference>
<dbReference type="InterPro" id="IPR015421">
    <property type="entry name" value="PyrdxlP-dep_Trfase_major"/>
</dbReference>
<dbReference type="InterPro" id="IPR015422">
    <property type="entry name" value="PyrdxlP-dep_Trfase_small"/>
</dbReference>
<dbReference type="NCBIfam" id="TIGR03812">
    <property type="entry name" value="tyr_de_CO2_Arch"/>
    <property type="match status" value="1"/>
</dbReference>
<dbReference type="PANTHER" id="PTHR42735">
    <property type="match status" value="1"/>
</dbReference>
<dbReference type="PANTHER" id="PTHR42735:SF6">
    <property type="entry name" value="SPHINGOSINE-1-PHOSPHATE LYASE 1"/>
    <property type="match status" value="1"/>
</dbReference>
<dbReference type="Pfam" id="PF00282">
    <property type="entry name" value="Pyridoxal_deC"/>
    <property type="match status" value="1"/>
</dbReference>
<dbReference type="SUPFAM" id="SSF53383">
    <property type="entry name" value="PLP-dependent transferases"/>
    <property type="match status" value="1"/>
</dbReference>
<name>MFNA_HALS3</name>
<proteinExistence type="inferred from homology"/>
<accession>B0R349</accession>
<protein>
    <recommendedName>
        <fullName evidence="1">Probable L-aspartate decarboxylase</fullName>
        <shortName evidence="1">ADC</shortName>
        <ecNumber evidence="1">4.1.1.11</ecNumber>
    </recommendedName>
</protein>
<keyword id="KW-0210">Decarboxylase</keyword>
<keyword id="KW-0456">Lyase</keyword>
<keyword id="KW-0663">Pyridoxal phosphate</keyword>
<evidence type="ECO:0000255" key="1">
    <source>
        <dbReference type="HAMAP-Rule" id="MF_01610"/>
    </source>
</evidence>
<gene>
    <name evidence="1" type="primary">mfnA</name>
    <name type="ordered locus">OE_1498R</name>
</gene>
<sequence length="355" mass="37357">MTRGEARRPPQEFDRVLSSMCTTPHPAAREAAQAFLATNPGDPETYPAVAERERDAVALLGEIVGLSSPHGYIAAGGTEANLQAVRAARNRADADAVNVVAPASAHFSFQKAADVLGVELRLAPTDGDHRADVAAVADLVDGDTAVVVGVAGTTEYGRVDPIPALADIAAGVDANLHVDAAWGGFVLPFTDHDWSFADAPVNTMAIDPHKMGQAPVPAGGFLARDPETLDALAIETPYLESDTQPTLGGTRSGAGVAGALASLRALWPDGYREQYERTQGNAEYLAAELAARGYDVVDPELPLVAADMPDAEFQALREEGWRISRTASDALRVVCMPHVTREMLAAFLDDVDALA</sequence>